<organism>
    <name type="scientific">Ajellomyces capsulatus (strain G186AR / H82 / ATCC MYA-2454 / RMSCC 2432)</name>
    <name type="common">Darling's disease fungus</name>
    <name type="synonym">Histoplasma capsulatum</name>
    <dbReference type="NCBI Taxonomy" id="447093"/>
    <lineage>
        <taxon>Eukaryota</taxon>
        <taxon>Fungi</taxon>
        <taxon>Dikarya</taxon>
        <taxon>Ascomycota</taxon>
        <taxon>Pezizomycotina</taxon>
        <taxon>Eurotiomycetes</taxon>
        <taxon>Eurotiomycetidae</taxon>
        <taxon>Onygenales</taxon>
        <taxon>Ajellomycetaceae</taxon>
        <taxon>Histoplasma</taxon>
    </lineage>
</organism>
<keyword id="KW-0067">ATP-binding</keyword>
<keyword id="KW-0963">Cytoplasm</keyword>
<keyword id="KW-0206">Cytoskeleton</keyword>
<keyword id="KW-0378">Hydrolase</keyword>
<keyword id="KW-0547">Nucleotide-binding</keyword>
<keyword id="KW-1185">Reference proteome</keyword>
<sequence length="375" mass="41609">MEEEVAALVIDNGSGMCKAGFAGDDAPRAVFPSIVGRPRHHGIMIGMGQKDSYVGDEAQSKRGILTLRYPIEHGVVTNWDDMEKIWHHTFYNELRVAPEEHPVLLTEAPINPKSNREKMTQIVFETFNAPAFYVSIQAVLSLYASGRTTGIVLDSGDGVTHVVPIYEGFALPHAISRIDMAGRDLTNYLMKILAERGYSFSTTAEREIVRDIKEKLCYVALDFQQEIQTASQSSSLEKSYELPDGQVITIGNERFRAPEALFQPSVLGLESGGIHATTYNAIMKCDVDVRKDLYGNIVMSGGTTMYPGISDRMQKEITALAPSSMKVKIIAPPERKYSVWIGGSILASLSTFQQMWISKQEYDESGPSIVHRKCF</sequence>
<dbReference type="EC" id="3.6.4.-" evidence="1"/>
<dbReference type="EMBL" id="U17498">
    <property type="protein sequence ID" value="AAA57122.1"/>
    <property type="molecule type" value="mRNA"/>
</dbReference>
<dbReference type="EMBL" id="GG663379">
    <property type="protein sequence ID" value="EEH03071.1"/>
    <property type="molecule type" value="Genomic_DNA"/>
</dbReference>
<dbReference type="RefSeq" id="XP_045283552.1">
    <property type="nucleotide sequence ID" value="XM_045435760.1"/>
</dbReference>
<dbReference type="SMR" id="P53455"/>
<dbReference type="FunCoup" id="P53455">
    <property type="interactions" value="1159"/>
</dbReference>
<dbReference type="STRING" id="447093.P53455"/>
<dbReference type="GeneID" id="69041727"/>
<dbReference type="VEuPathDB" id="FungiDB:I7I50_09239"/>
<dbReference type="HOGENOM" id="CLU_027965_0_2_1"/>
<dbReference type="InParanoid" id="P53455"/>
<dbReference type="Proteomes" id="UP000001631">
    <property type="component" value="Unassembled WGS sequence"/>
</dbReference>
<dbReference type="GO" id="GO:0005737">
    <property type="term" value="C:cytoplasm"/>
    <property type="evidence" value="ECO:0007669"/>
    <property type="project" value="UniProtKB-KW"/>
</dbReference>
<dbReference type="GO" id="GO:0005856">
    <property type="term" value="C:cytoskeleton"/>
    <property type="evidence" value="ECO:0007669"/>
    <property type="project" value="UniProtKB-SubCell"/>
</dbReference>
<dbReference type="GO" id="GO:0005524">
    <property type="term" value="F:ATP binding"/>
    <property type="evidence" value="ECO:0007669"/>
    <property type="project" value="UniProtKB-KW"/>
</dbReference>
<dbReference type="GO" id="GO:0016787">
    <property type="term" value="F:hydrolase activity"/>
    <property type="evidence" value="ECO:0007669"/>
    <property type="project" value="UniProtKB-KW"/>
</dbReference>
<dbReference type="CDD" id="cd10224">
    <property type="entry name" value="ASKHA_NBD_actin"/>
    <property type="match status" value="1"/>
</dbReference>
<dbReference type="FunFam" id="3.30.420.40:FF:000131">
    <property type="entry name" value="Actin, alpha skeletal muscle"/>
    <property type="match status" value="1"/>
</dbReference>
<dbReference type="FunFam" id="3.30.420.40:FF:000291">
    <property type="entry name" value="Actin, alpha skeletal muscle"/>
    <property type="match status" value="1"/>
</dbReference>
<dbReference type="FunFam" id="3.90.640.10:FF:000001">
    <property type="entry name" value="Actin, muscle"/>
    <property type="match status" value="1"/>
</dbReference>
<dbReference type="FunFam" id="3.30.420.40:FF:000058">
    <property type="entry name" value="Putative actin-related protein 5"/>
    <property type="match status" value="1"/>
</dbReference>
<dbReference type="Gene3D" id="3.30.420.40">
    <property type="match status" value="2"/>
</dbReference>
<dbReference type="Gene3D" id="3.90.640.10">
    <property type="entry name" value="Actin, Chain A, domain 4"/>
    <property type="match status" value="1"/>
</dbReference>
<dbReference type="InterPro" id="IPR004000">
    <property type="entry name" value="Actin"/>
</dbReference>
<dbReference type="InterPro" id="IPR020902">
    <property type="entry name" value="Actin/actin-like_CS"/>
</dbReference>
<dbReference type="InterPro" id="IPR004001">
    <property type="entry name" value="Actin_CS"/>
</dbReference>
<dbReference type="InterPro" id="IPR043129">
    <property type="entry name" value="ATPase_NBD"/>
</dbReference>
<dbReference type="PANTHER" id="PTHR11937">
    <property type="entry name" value="ACTIN"/>
    <property type="match status" value="1"/>
</dbReference>
<dbReference type="Pfam" id="PF00022">
    <property type="entry name" value="Actin"/>
    <property type="match status" value="1"/>
</dbReference>
<dbReference type="PRINTS" id="PR00190">
    <property type="entry name" value="ACTIN"/>
</dbReference>
<dbReference type="SMART" id="SM00268">
    <property type="entry name" value="ACTIN"/>
    <property type="match status" value="1"/>
</dbReference>
<dbReference type="SUPFAM" id="SSF53067">
    <property type="entry name" value="Actin-like ATPase domain"/>
    <property type="match status" value="2"/>
</dbReference>
<dbReference type="PROSITE" id="PS00406">
    <property type="entry name" value="ACTINS_1"/>
    <property type="match status" value="1"/>
</dbReference>
<dbReference type="PROSITE" id="PS00432">
    <property type="entry name" value="ACTINS_2"/>
    <property type="match status" value="1"/>
</dbReference>
<dbReference type="PROSITE" id="PS01132">
    <property type="entry name" value="ACTINS_ACT_LIKE"/>
    <property type="match status" value="1"/>
</dbReference>
<feature type="chain" id="PRO_0000088887" description="Actin">
    <location>
        <begin position="1"/>
        <end position="375"/>
    </location>
</feature>
<feature type="sequence conflict" description="In Ref. 1; AAA57122." evidence="2" ref="1">
    <original>A</original>
    <variation>S</variation>
    <location>
        <position position="29"/>
    </location>
</feature>
<feature type="sequence conflict" description="In Ref. 1; AAA57122." evidence="2" ref="1">
    <original>A</original>
    <variation>R</variation>
    <location>
        <position position="319"/>
    </location>
</feature>
<proteinExistence type="evidence at transcript level"/>
<reference key="1">
    <citation type="journal article" date="1997" name="J. Med. Vet. Mycol.">
        <title>Cloning and analysis of an actin-encoding cDNA from the dimorphic pathogenic fungus Histoplasma capsulatum.</title>
        <authorList>
            <person name="El-Rady J."/>
            <person name="Shearer G. Jr."/>
        </authorList>
    </citation>
    <scope>NUCLEOTIDE SEQUENCE [MRNA]</scope>
</reference>
<reference key="2">
    <citation type="submission" date="2009-02" db="EMBL/GenBank/DDBJ databases">
        <title>The genome sequence of Ajellomyces capsulatus strain G186AR.</title>
        <authorList>
            <person name="Champion M."/>
            <person name="Cuomo C.A."/>
            <person name="Ma L.-J."/>
            <person name="Henn M.R."/>
            <person name="Sil A."/>
            <person name="Goldman B."/>
            <person name="Young S.K."/>
            <person name="Kodira C.D."/>
            <person name="Zeng Q."/>
            <person name="Koehrsen M."/>
            <person name="Alvarado L."/>
            <person name="Berlin A."/>
            <person name="Borenstein D."/>
            <person name="Chen Z."/>
            <person name="Engels R."/>
            <person name="Freedman E."/>
            <person name="Gellesch M."/>
            <person name="Goldberg J."/>
            <person name="Griggs A."/>
            <person name="Gujja S."/>
            <person name="Heiman D."/>
            <person name="Hepburn T."/>
            <person name="Howarth C."/>
            <person name="Jen D."/>
            <person name="Larson L."/>
            <person name="Lewis B."/>
            <person name="Mehta T."/>
            <person name="Park D."/>
            <person name="Pearson M."/>
            <person name="Roberts A."/>
            <person name="Saif S."/>
            <person name="Shea T."/>
            <person name="Shenoy N."/>
            <person name="Sisk P."/>
            <person name="Stolte C."/>
            <person name="Sykes S."/>
            <person name="Walk T."/>
            <person name="White J."/>
            <person name="Yandava C."/>
            <person name="Klein B."/>
            <person name="McEwen J.G."/>
            <person name="Puccia R."/>
            <person name="Goldman G.H."/>
            <person name="Felipe M.S."/>
            <person name="Nino-Vega G."/>
            <person name="San-Blas G."/>
            <person name="Taylor J."/>
            <person name="Mendoza L."/>
            <person name="Galagan J.E."/>
            <person name="Nusbaum C."/>
            <person name="Birren B.W."/>
        </authorList>
    </citation>
    <scope>NUCLEOTIDE SEQUENCE [LARGE SCALE GENOMIC DNA]</scope>
    <source>
        <strain>G186AR / H82 / ATCC MYA-2454 / RMSCC 2432</strain>
    </source>
</reference>
<gene>
    <name type="ORF">HCBG_08711</name>
</gene>
<name>ACT_AJECG</name>
<comment type="function">
    <text>Actins are highly conserved proteins that are involved in various types of cell motility and are ubiquitously expressed in all eukaryotic cells.</text>
</comment>
<comment type="catalytic activity">
    <reaction evidence="1">
        <text>ATP + H2O = ADP + phosphate + H(+)</text>
        <dbReference type="Rhea" id="RHEA:13065"/>
        <dbReference type="ChEBI" id="CHEBI:15377"/>
        <dbReference type="ChEBI" id="CHEBI:15378"/>
        <dbReference type="ChEBI" id="CHEBI:30616"/>
        <dbReference type="ChEBI" id="CHEBI:43474"/>
        <dbReference type="ChEBI" id="CHEBI:456216"/>
    </reaction>
</comment>
<comment type="subcellular location">
    <subcellularLocation>
        <location>Cytoplasm</location>
        <location>Cytoskeleton</location>
    </subcellularLocation>
</comment>
<comment type="similarity">
    <text evidence="2">Belongs to the actin family.</text>
</comment>
<protein>
    <recommendedName>
        <fullName>Actin</fullName>
        <ecNumber evidence="1">3.6.4.-</ecNumber>
    </recommendedName>
</protein>
<evidence type="ECO:0000250" key="1">
    <source>
        <dbReference type="UniProtKB" id="P60010"/>
    </source>
</evidence>
<evidence type="ECO:0000305" key="2"/>
<accession>P53455</accession>
<accession>C0NZY1</accession>